<feature type="initiator methionine" description="Removed" evidence="4 5">
    <location>
        <position position="1"/>
    </location>
</feature>
<feature type="chain" id="PRO_0000012609" description="Guanine nucleotide-binding protein G(I)/G(S)/G(O) subunit gamma-2" evidence="4">
    <location>
        <begin position="2"/>
        <end position="68"/>
    </location>
</feature>
<feature type="propeptide" id="PRO_0000012610" description="Removed in mature form" evidence="4">
    <location>
        <begin position="69"/>
        <end position="71"/>
    </location>
</feature>
<feature type="modified residue" description="N-acetylalanine" evidence="4">
    <location>
        <position position="2"/>
    </location>
</feature>
<feature type="modified residue" description="Cysteine methyl ester" evidence="3">
    <location>
        <position position="68"/>
    </location>
</feature>
<feature type="lipid moiety-binding region" description="S-geranylgeranyl cysteine" evidence="2 3 4">
    <location>
        <position position="68"/>
    </location>
</feature>
<feature type="helix" evidence="8">
    <location>
        <begin position="9"/>
        <end position="23"/>
    </location>
</feature>
<feature type="helix" evidence="8">
    <location>
        <begin position="30"/>
        <end position="43"/>
    </location>
</feature>
<feature type="helix" evidence="8">
    <location>
        <begin position="45"/>
        <end position="47"/>
    </location>
</feature>
<feature type="turn" evidence="8">
    <location>
        <begin position="49"/>
        <end position="51"/>
    </location>
</feature>
<feature type="helix" evidence="8">
    <location>
        <begin position="56"/>
        <end position="58"/>
    </location>
</feature>
<feature type="turn" evidence="8">
    <location>
        <begin position="60"/>
        <end position="63"/>
    </location>
</feature>
<protein>
    <recommendedName>
        <fullName>Guanine nucleotide-binding protein G(I)/G(S)/G(O) subunit gamma-2</fullName>
    </recommendedName>
    <alternativeName>
        <fullName>G gamma-I</fullName>
    </alternativeName>
</protein>
<proteinExistence type="evidence at protein level"/>
<organism>
    <name type="scientific">Bos taurus</name>
    <name type="common">Bovine</name>
    <dbReference type="NCBI Taxonomy" id="9913"/>
    <lineage>
        <taxon>Eukaryota</taxon>
        <taxon>Metazoa</taxon>
        <taxon>Chordata</taxon>
        <taxon>Craniata</taxon>
        <taxon>Vertebrata</taxon>
        <taxon>Euteleostomi</taxon>
        <taxon>Mammalia</taxon>
        <taxon>Eutheria</taxon>
        <taxon>Laurasiatheria</taxon>
        <taxon>Artiodactyla</taxon>
        <taxon>Ruminantia</taxon>
        <taxon>Pecora</taxon>
        <taxon>Bovidae</taxon>
        <taxon>Bovinae</taxon>
        <taxon>Bos</taxon>
    </lineage>
</organism>
<evidence type="ECO:0000250" key="1">
    <source>
        <dbReference type="UniProtKB" id="P59768"/>
    </source>
</evidence>
<evidence type="ECO:0000269" key="2">
    <source>
    </source>
</evidence>
<evidence type="ECO:0000269" key="3">
    <source>
    </source>
</evidence>
<evidence type="ECO:0000269" key="4">
    <source>
    </source>
</evidence>
<evidence type="ECO:0000269" key="5">
    <source>
    </source>
</evidence>
<evidence type="ECO:0000269" key="6">
    <source>
    </source>
</evidence>
<evidence type="ECO:0000305" key="7"/>
<evidence type="ECO:0007829" key="8">
    <source>
        <dbReference type="PDB" id="3V5W"/>
    </source>
</evidence>
<comment type="function">
    <text>Guanine nucleotide-binding proteins (G proteins) are involved as a modulator or transducer in various transmembrane signaling systems. The beta and gamma chains are required for the GTPase activity, for replacement of GDP by GTP, and for G protein-effector interaction.</text>
</comment>
<comment type="subunit">
    <text evidence="1 2 6">G proteins are composed of 3 units, alpha, beta and gamma (PubMed:8521505). In this context, interacts with GNB2 (By similarity). The heterodimer formed by GNB1 and GNG2 interacts with ARHGEF5 (By similarity). The heterodimer formed by GNB1 and GNG2 interacts with GRK2 (PubMed:12764189). Component of the TAS2R14-GNAI1 complex, consisting of TAS2R14, GNAI1, GNB1 and GNG2 (By similarity). Forms complexes with TAS2R14 and G-proteins; these complexes play a role in the perception of bitterness (By similarity). Component of the TAS2R14-GNAT3 complex, consisting of TAS2R14, GNAT3, GNB1 and GNG2 (By similarity). Component of the TAS2R14-GNAS2 complex, consisting of TAS2R14, GNAS2, GNB1 and GNG2 (By similarity).</text>
</comment>
<comment type="interaction">
    <interactant intactId="EBI-1036424">
        <id>P63212</id>
    </interactant>
    <interactant intactId="EBI-357141">
        <id>P62871</id>
        <label>GNB1</label>
    </interactant>
    <organismsDiffer>false</organismsDiffer>
    <experiments>6</experiments>
</comment>
<comment type="subcellular location">
    <subcellularLocation>
        <location evidence="2">Cell membrane</location>
        <topology evidence="7">Lipid-anchor</topology>
        <orientation evidence="2">Cytoplasmic side</orientation>
    </subcellularLocation>
</comment>
<comment type="tissue specificity">
    <text>Adrenal gland and brain.</text>
</comment>
<comment type="similarity">
    <text evidence="7">Belongs to the G protein gamma family.</text>
</comment>
<sequence>MASNNTASIAQARKLVEQLKMEANIDRIKVSKAAADLMAYCEAHAKEDPLLTPVPASENPFREKKFFCAIL</sequence>
<dbReference type="EMBL" id="J05071">
    <property type="protein sequence ID" value="AAA30541.1"/>
    <property type="molecule type" value="mRNA"/>
</dbReference>
<dbReference type="EMBL" id="M37183">
    <property type="protein sequence ID" value="AAA30555.1"/>
    <property type="molecule type" value="mRNA"/>
</dbReference>
<dbReference type="EMBL" id="BC112789">
    <property type="protein sequence ID" value="AAI12790.1"/>
    <property type="molecule type" value="mRNA"/>
</dbReference>
<dbReference type="PIR" id="B34228">
    <property type="entry name" value="RGBOG2"/>
</dbReference>
<dbReference type="RefSeq" id="NP_776497.1">
    <property type="nucleotide sequence ID" value="NM_174072.4"/>
</dbReference>
<dbReference type="RefSeq" id="XP_005211711.1">
    <property type="nucleotide sequence ID" value="XM_005211654.5"/>
</dbReference>
<dbReference type="RefSeq" id="XP_010807541.1">
    <property type="nucleotide sequence ID" value="XM_010809239.2"/>
</dbReference>
<dbReference type="RefSeq" id="XP_059746176.1">
    <property type="nucleotide sequence ID" value="XM_059890193.1"/>
</dbReference>
<dbReference type="RefSeq" id="XP_059746177.1">
    <property type="nucleotide sequence ID" value="XM_059890194.1"/>
</dbReference>
<dbReference type="RefSeq" id="XP_059746178.1">
    <property type="nucleotide sequence ID" value="XM_059890195.1"/>
</dbReference>
<dbReference type="RefSeq" id="XP_059746179.1">
    <property type="nucleotide sequence ID" value="XM_059890196.1"/>
</dbReference>
<dbReference type="RefSeq" id="XP_059746181.1">
    <property type="nucleotide sequence ID" value="XM_059890198.1"/>
</dbReference>
<dbReference type="RefSeq" id="XP_059746182.1">
    <property type="nucleotide sequence ID" value="XM_059890199.1"/>
</dbReference>
<dbReference type="PDB" id="1GG2">
    <property type="method" value="X-ray"/>
    <property type="resolution" value="2.40 A"/>
    <property type="chains" value="G=1-71"/>
</dbReference>
<dbReference type="PDB" id="1GP2">
    <property type="method" value="X-ray"/>
    <property type="resolution" value="2.30 A"/>
    <property type="chains" value="G=1-71"/>
</dbReference>
<dbReference type="PDB" id="1OMW">
    <property type="method" value="X-ray"/>
    <property type="resolution" value="2.50 A"/>
    <property type="chains" value="G=1-68"/>
</dbReference>
<dbReference type="PDB" id="1XHM">
    <property type="method" value="X-ray"/>
    <property type="resolution" value="2.70 A"/>
    <property type="chains" value="B=1-71"/>
</dbReference>
<dbReference type="PDB" id="2BCJ">
    <property type="method" value="X-ray"/>
    <property type="resolution" value="3.06 A"/>
    <property type="chains" value="G=1-71"/>
</dbReference>
<dbReference type="PDB" id="3AH8">
    <property type="method" value="X-ray"/>
    <property type="resolution" value="2.90 A"/>
    <property type="chains" value="G=1-71"/>
</dbReference>
<dbReference type="PDB" id="3CIK">
    <property type="method" value="X-ray"/>
    <property type="resolution" value="2.75 A"/>
    <property type="chains" value="G=1-68"/>
</dbReference>
<dbReference type="PDB" id="3KRW">
    <property type="method" value="X-ray"/>
    <property type="resolution" value="2.90 A"/>
    <property type="chains" value="G=1-68"/>
</dbReference>
<dbReference type="PDB" id="3KRX">
    <property type="method" value="X-ray"/>
    <property type="resolution" value="3.10 A"/>
    <property type="chains" value="G=1-68"/>
</dbReference>
<dbReference type="PDB" id="3PSC">
    <property type="method" value="X-ray"/>
    <property type="resolution" value="2.67 A"/>
    <property type="chains" value="G=1-68"/>
</dbReference>
<dbReference type="PDB" id="3PVU">
    <property type="method" value="X-ray"/>
    <property type="resolution" value="2.48 A"/>
    <property type="chains" value="G=1-68"/>
</dbReference>
<dbReference type="PDB" id="3PVW">
    <property type="method" value="X-ray"/>
    <property type="resolution" value="2.49 A"/>
    <property type="chains" value="G=1-68"/>
</dbReference>
<dbReference type="PDB" id="3SN6">
    <property type="method" value="X-ray"/>
    <property type="resolution" value="3.20 A"/>
    <property type="chains" value="G=1-68"/>
</dbReference>
<dbReference type="PDB" id="3UZS">
    <property type="method" value="X-ray"/>
    <property type="resolution" value="4.52 A"/>
    <property type="chains" value="G=1-67"/>
</dbReference>
<dbReference type="PDB" id="3V5W">
    <property type="method" value="X-ray"/>
    <property type="resolution" value="2.07 A"/>
    <property type="chains" value="G=1-71"/>
</dbReference>
<dbReference type="PDB" id="4MK0">
    <property type="method" value="X-ray"/>
    <property type="resolution" value="2.40 A"/>
    <property type="chains" value="G=6-64"/>
</dbReference>
<dbReference type="PDB" id="4PNK">
    <property type="method" value="X-ray"/>
    <property type="resolution" value="2.56 A"/>
    <property type="chains" value="G=1-71"/>
</dbReference>
<dbReference type="PDB" id="5TDH">
    <property type="method" value="X-ray"/>
    <property type="resolution" value="3.00 A"/>
    <property type="chains" value="G/K=1-68"/>
</dbReference>
<dbReference type="PDB" id="5VAI">
    <property type="method" value="EM"/>
    <property type="resolution" value="4.10 A"/>
    <property type="chains" value="G=1-68"/>
</dbReference>
<dbReference type="PDB" id="5WG3">
    <property type="method" value="X-ray"/>
    <property type="resolution" value="2.90 A"/>
    <property type="chains" value="G=1-71"/>
</dbReference>
<dbReference type="PDB" id="5WG4">
    <property type="method" value="X-ray"/>
    <property type="resolution" value="2.31 A"/>
    <property type="chains" value="G=1-71"/>
</dbReference>
<dbReference type="PDB" id="5WG5">
    <property type="method" value="X-ray"/>
    <property type="resolution" value="3.10 A"/>
    <property type="chains" value="G=1-71"/>
</dbReference>
<dbReference type="PDB" id="6C2Y">
    <property type="method" value="X-ray"/>
    <property type="resolution" value="2.74 A"/>
    <property type="chains" value="G=1-71"/>
</dbReference>
<dbReference type="PDB" id="6CMO">
    <property type="method" value="EM"/>
    <property type="resolution" value="4.50 A"/>
    <property type="chains" value="G=1-68"/>
</dbReference>
<dbReference type="PDB" id="6LPB">
    <property type="method" value="EM"/>
    <property type="resolution" value="3.90 A"/>
    <property type="chains" value="G=1-67"/>
</dbReference>
<dbReference type="PDB" id="6NBF">
    <property type="method" value="EM"/>
    <property type="resolution" value="3.00 A"/>
    <property type="chains" value="G=1-71"/>
</dbReference>
<dbReference type="PDB" id="6NBH">
    <property type="method" value="EM"/>
    <property type="resolution" value="3.50 A"/>
    <property type="chains" value="G=1-71"/>
</dbReference>
<dbReference type="PDB" id="6NBI">
    <property type="method" value="EM"/>
    <property type="resolution" value="4.00 A"/>
    <property type="chains" value="G=1-71"/>
</dbReference>
<dbReference type="PDB" id="6PCV">
    <property type="method" value="EM"/>
    <property type="resolution" value="3.20 A"/>
    <property type="chains" value="G=1-71"/>
</dbReference>
<dbReference type="PDB" id="6U7C">
    <property type="method" value="X-ray"/>
    <property type="resolution" value="2.44 A"/>
    <property type="chains" value="G=1-71"/>
</dbReference>
<dbReference type="PDB" id="7BW0">
    <property type="method" value="EM"/>
    <property type="resolution" value="3.90 A"/>
    <property type="chains" value="G=1-71"/>
</dbReference>
<dbReference type="PDB" id="7BZ2">
    <property type="method" value="EM"/>
    <property type="resolution" value="3.82 A"/>
    <property type="chains" value="G=1-71"/>
</dbReference>
<dbReference type="PDB" id="7CZ5">
    <property type="method" value="EM"/>
    <property type="resolution" value="2.60 A"/>
    <property type="chains" value="G=1-71"/>
</dbReference>
<dbReference type="PDB" id="7D3S">
    <property type="method" value="EM"/>
    <property type="resolution" value="2.90 A"/>
    <property type="chains" value="G=1-67"/>
</dbReference>
<dbReference type="PDB" id="7D68">
    <property type="method" value="EM"/>
    <property type="resolution" value="3.00 A"/>
    <property type="chains" value="G=1-71"/>
</dbReference>
<dbReference type="PDB" id="7DB6">
    <property type="method" value="EM"/>
    <property type="resolution" value="3.30 A"/>
    <property type="chains" value="C=1-67"/>
</dbReference>
<dbReference type="PDB" id="7DH5">
    <property type="method" value="EM"/>
    <property type="resolution" value="3.16 A"/>
    <property type="chains" value="G=1-67"/>
</dbReference>
<dbReference type="PDB" id="7DHI">
    <property type="method" value="EM"/>
    <property type="resolution" value="3.26 A"/>
    <property type="chains" value="G=1-71"/>
</dbReference>
<dbReference type="PDB" id="7DHR">
    <property type="method" value="EM"/>
    <property type="resolution" value="3.80 A"/>
    <property type="chains" value="G=1-71"/>
</dbReference>
<dbReference type="PDB" id="7DTY">
    <property type="method" value="EM"/>
    <property type="resolution" value="2.98 A"/>
    <property type="chains" value="G=1-71"/>
</dbReference>
<dbReference type="PDB" id="7DUQ">
    <property type="method" value="EM"/>
    <property type="resolution" value="2.50 A"/>
    <property type="chains" value="G=2-71"/>
</dbReference>
<dbReference type="PDB" id="7DUR">
    <property type="method" value="EM"/>
    <property type="resolution" value="3.30 A"/>
    <property type="chains" value="G=2-71"/>
</dbReference>
<dbReference type="PDB" id="7DW9">
    <property type="method" value="EM"/>
    <property type="resolution" value="2.60 A"/>
    <property type="chains" value="Y=1-71"/>
</dbReference>
<dbReference type="PDB" id="7EIB">
    <property type="method" value="EM"/>
    <property type="resolution" value="3.00 A"/>
    <property type="chains" value="E=1-71"/>
</dbReference>
<dbReference type="PDB" id="7EQ1">
    <property type="method" value="EM"/>
    <property type="resolution" value="3.30 A"/>
    <property type="chains" value="Y=1-71"/>
</dbReference>
<dbReference type="PDB" id="7EVM">
    <property type="method" value="EM"/>
    <property type="resolution" value="2.50 A"/>
    <property type="chains" value="G=2-71"/>
</dbReference>
<dbReference type="PDB" id="7F16">
    <property type="method" value="EM"/>
    <property type="resolution" value="2.80 A"/>
    <property type="chains" value="G=1-71"/>
</dbReference>
<dbReference type="PDB" id="7F2O">
    <property type="method" value="EM"/>
    <property type="resolution" value="2.90 A"/>
    <property type="chains" value="Y=1-71"/>
</dbReference>
<dbReference type="PDB" id="7FIG">
    <property type="method" value="EM"/>
    <property type="resolution" value="3.90 A"/>
    <property type="chains" value="G=1-71"/>
</dbReference>
<dbReference type="PDB" id="7FIH">
    <property type="method" value="EM"/>
    <property type="resolution" value="3.20 A"/>
    <property type="chains" value="G=1-71"/>
</dbReference>
<dbReference type="PDB" id="7FII">
    <property type="method" value="EM"/>
    <property type="resolution" value="4.30 A"/>
    <property type="chains" value="G=1-71"/>
</dbReference>
<dbReference type="PDB" id="7FIM">
    <property type="method" value="EM"/>
    <property type="resolution" value="3.40 A"/>
    <property type="chains" value="G=1-71"/>
</dbReference>
<dbReference type="PDB" id="7FIN">
    <property type="method" value="EM"/>
    <property type="resolution" value="3.10 A"/>
    <property type="chains" value="G=1-71"/>
</dbReference>
<dbReference type="PDB" id="7FIY">
    <property type="method" value="EM"/>
    <property type="resolution" value="3.40 A"/>
    <property type="chains" value="G=1-71"/>
</dbReference>
<dbReference type="PDB" id="7JJO">
    <property type="method" value="EM"/>
    <property type="resolution" value="2.60 A"/>
    <property type="chains" value="G=1-71"/>
</dbReference>
<dbReference type="PDB" id="7LJC">
    <property type="method" value="EM"/>
    <property type="resolution" value="3.00 A"/>
    <property type="chains" value="G=2-68"/>
</dbReference>
<dbReference type="PDB" id="7LJD">
    <property type="method" value="EM"/>
    <property type="resolution" value="3.20 A"/>
    <property type="chains" value="G=2-68"/>
</dbReference>
<dbReference type="PDB" id="7PIU">
    <property type="method" value="EM"/>
    <property type="resolution" value="2.58 A"/>
    <property type="chains" value="G=1-71"/>
</dbReference>
<dbReference type="PDB" id="7PWD">
    <property type="method" value="X-ray"/>
    <property type="resolution" value="2.60 A"/>
    <property type="chains" value="G=1-71"/>
</dbReference>
<dbReference type="PDB" id="7S0F">
    <property type="method" value="EM"/>
    <property type="resolution" value="2.96 A"/>
    <property type="chains" value="G=1-71"/>
</dbReference>
<dbReference type="PDB" id="7S0G">
    <property type="method" value="EM"/>
    <property type="resolution" value="3.86 A"/>
    <property type="chains" value="G=1-71"/>
</dbReference>
<dbReference type="PDB" id="7SQO">
    <property type="method" value="EM"/>
    <property type="resolution" value="3.17 A"/>
    <property type="chains" value="G=1-68"/>
</dbReference>
<dbReference type="PDB" id="7T6S">
    <property type="method" value="EM"/>
    <property type="resolution" value="3.00 A"/>
    <property type="chains" value="C=2-68"/>
</dbReference>
<dbReference type="PDB" id="7T6T">
    <property type="method" value="EM"/>
    <property type="resolution" value="3.20 A"/>
    <property type="chains" value="C=2-68"/>
</dbReference>
<dbReference type="PDB" id="7T6U">
    <property type="method" value="EM"/>
    <property type="resolution" value="2.90 A"/>
    <property type="chains" value="C=2-68"/>
</dbReference>
<dbReference type="PDB" id="7T6V">
    <property type="method" value="EM"/>
    <property type="resolution" value="3.10 A"/>
    <property type="chains" value="C=2-68"/>
</dbReference>
<dbReference type="PDB" id="7TD0">
    <property type="method" value="EM"/>
    <property type="resolution" value="2.83 A"/>
    <property type="chains" value="G=1-71"/>
</dbReference>
<dbReference type="PDB" id="7TD1">
    <property type="method" value="EM"/>
    <property type="resolution" value="3.08 A"/>
    <property type="chains" value="G=1-71"/>
</dbReference>
<dbReference type="PDB" id="7TD2">
    <property type="method" value="EM"/>
    <property type="resolution" value="3.11 A"/>
    <property type="chains" value="G=1-71"/>
</dbReference>
<dbReference type="PDB" id="7TD3">
    <property type="method" value="EM"/>
    <property type="resolution" value="3.00 A"/>
    <property type="chains" value="G=1-71"/>
</dbReference>
<dbReference type="PDB" id="7TD4">
    <property type="method" value="EM"/>
    <property type="resolution" value="2.60 A"/>
    <property type="chains" value="G=1-71"/>
</dbReference>
<dbReference type="PDB" id="7V35">
    <property type="method" value="EM"/>
    <property type="resolution" value="3.40 A"/>
    <property type="chains" value="C=1-71"/>
</dbReference>
<dbReference type="PDB" id="7V9L">
    <property type="method" value="EM"/>
    <property type="resolution" value="2.60 A"/>
    <property type="chains" value="Y=1-71"/>
</dbReference>
<dbReference type="PDB" id="7V9M">
    <property type="method" value="EM"/>
    <property type="resolution" value="3.29 A"/>
    <property type="chains" value="Y=1-71"/>
</dbReference>
<dbReference type="PDB" id="7VAB">
    <property type="method" value="EM"/>
    <property type="resolution" value="3.20 A"/>
    <property type="chains" value="G=1-64"/>
</dbReference>
<dbReference type="PDB" id="7VBH">
    <property type="method" value="EM"/>
    <property type="resolution" value="3.00 A"/>
    <property type="chains" value="G=2-71"/>
</dbReference>
<dbReference type="PDB" id="7VBI">
    <property type="method" value="EM"/>
    <property type="resolution" value="3.00 A"/>
    <property type="chains" value="G=2-71"/>
</dbReference>
<dbReference type="PDB" id="7VGY">
    <property type="method" value="EM"/>
    <property type="resolution" value="3.10 A"/>
    <property type="chains" value="D=2-68"/>
</dbReference>
<dbReference type="PDB" id="7VGZ">
    <property type="method" value="EM"/>
    <property type="resolution" value="3.30 A"/>
    <property type="chains" value="E=2-68"/>
</dbReference>
<dbReference type="PDB" id="7VQX">
    <property type="method" value="EM"/>
    <property type="resolution" value="2.74 A"/>
    <property type="chains" value="G=1-71"/>
</dbReference>
<dbReference type="PDB" id="7VVJ">
    <property type="method" value="EM"/>
    <property type="resolution" value="3.20 A"/>
    <property type="chains" value="G=1-67"/>
</dbReference>
<dbReference type="PDB" id="7VVK">
    <property type="method" value="EM"/>
    <property type="resolution" value="3.30 A"/>
    <property type="chains" value="G=1-67"/>
</dbReference>
<dbReference type="PDB" id="7VVL">
    <property type="method" value="EM"/>
    <property type="resolution" value="2.80 A"/>
    <property type="chains" value="G=1-67"/>
</dbReference>
<dbReference type="PDB" id="7VVM">
    <property type="method" value="EM"/>
    <property type="resolution" value="3.20 A"/>
    <property type="chains" value="G=1-67"/>
</dbReference>
<dbReference type="PDB" id="7VVN">
    <property type="method" value="EM"/>
    <property type="resolution" value="3.80 A"/>
    <property type="chains" value="G=1-67"/>
</dbReference>
<dbReference type="PDB" id="7VVO">
    <property type="method" value="EM"/>
    <property type="resolution" value="4.10 A"/>
    <property type="chains" value="G=1-67"/>
</dbReference>
<dbReference type="PDB" id="7WBJ">
    <property type="method" value="EM"/>
    <property type="resolution" value="3.42 A"/>
    <property type="chains" value="G=1-71"/>
</dbReference>
<dbReference type="PDB" id="7WIC">
    <property type="method" value="EM"/>
    <property type="resolution" value="2.80 A"/>
    <property type="chains" value="G=2-71"/>
</dbReference>
<dbReference type="PDB" id="7WIG">
    <property type="method" value="EM"/>
    <property type="resolution" value="2.70 A"/>
    <property type="chains" value="G=2-71"/>
</dbReference>
<dbReference type="PDB" id="7WQ3">
    <property type="method" value="EM"/>
    <property type="resolution" value="2.70 A"/>
    <property type="chains" value="G=1-71"/>
</dbReference>
<dbReference type="PDB" id="7WQ4">
    <property type="method" value="EM"/>
    <property type="resolution" value="2.60 A"/>
    <property type="chains" value="G=1-71"/>
</dbReference>
<dbReference type="PDB" id="7X1T">
    <property type="method" value="EM"/>
    <property type="resolution" value="3.26 A"/>
    <property type="chains" value="F=1-71"/>
</dbReference>
<dbReference type="PDB" id="7X1U">
    <property type="method" value="EM"/>
    <property type="resolution" value="3.19 A"/>
    <property type="chains" value="F=1-71"/>
</dbReference>
<dbReference type="PDB" id="7XAT">
    <property type="method" value="EM"/>
    <property type="resolution" value="2.85 A"/>
    <property type="chains" value="D=1-71"/>
</dbReference>
<dbReference type="PDB" id="7XAU">
    <property type="method" value="EM"/>
    <property type="resolution" value="2.97 A"/>
    <property type="chains" value="D=1-71"/>
</dbReference>
<dbReference type="PDB" id="7XAV">
    <property type="method" value="EM"/>
    <property type="resolution" value="2.87 A"/>
    <property type="chains" value="D=1-71"/>
</dbReference>
<dbReference type="PDB" id="7XJH">
    <property type="method" value="EM"/>
    <property type="resolution" value="3.30 A"/>
    <property type="chains" value="G=1-67"/>
</dbReference>
<dbReference type="PDB" id="7XJI">
    <property type="method" value="EM"/>
    <property type="resolution" value="3.90 A"/>
    <property type="chains" value="G=1-67"/>
</dbReference>
<dbReference type="PDB" id="7XW9">
    <property type="method" value="EM"/>
    <property type="resolution" value="2.70 A"/>
    <property type="chains" value="G=2-71"/>
</dbReference>
<dbReference type="PDB" id="7XWO">
    <property type="method" value="EM"/>
    <property type="resolution" value="2.70 A"/>
    <property type="chains" value="G=1-71"/>
</dbReference>
<dbReference type="PDB" id="7Y35">
    <property type="method" value="EM"/>
    <property type="resolution" value="2.90 A"/>
    <property type="chains" value="G=2-71"/>
</dbReference>
<dbReference type="PDB" id="7Y36">
    <property type="method" value="EM"/>
    <property type="resolution" value="2.80 A"/>
    <property type="chains" value="G=2-71"/>
</dbReference>
<dbReference type="PDB" id="7YJ4">
    <property type="method" value="EM"/>
    <property type="resolution" value="3.19 A"/>
    <property type="chains" value="G=1-71"/>
</dbReference>
<dbReference type="PDB" id="7YK6">
    <property type="method" value="EM"/>
    <property type="resolution" value="3.03 A"/>
    <property type="chains" value="G=1-71"/>
</dbReference>
<dbReference type="PDB" id="7YK7">
    <property type="method" value="EM"/>
    <property type="resolution" value="2.75 A"/>
    <property type="chains" value="G=1-71"/>
</dbReference>
<dbReference type="PDB" id="7YU3">
    <property type="method" value="EM"/>
    <property type="resolution" value="3.40 A"/>
    <property type="chains" value="G=1-67"/>
</dbReference>
<dbReference type="PDB" id="7YU5">
    <property type="method" value="EM"/>
    <property type="resolution" value="3.30 A"/>
    <property type="chains" value="G=1-67"/>
</dbReference>
<dbReference type="PDB" id="7YU6">
    <property type="method" value="EM"/>
    <property type="resolution" value="3.50 A"/>
    <property type="chains" value="G=1-67"/>
</dbReference>
<dbReference type="PDB" id="7YU7">
    <property type="method" value="EM"/>
    <property type="resolution" value="3.80 A"/>
    <property type="chains" value="G=1-67"/>
</dbReference>
<dbReference type="PDB" id="7YU8">
    <property type="method" value="EM"/>
    <property type="resolution" value="4.50 A"/>
    <property type="chains" value="G=1-67"/>
</dbReference>
<dbReference type="PDB" id="8DCR">
    <property type="method" value="EM"/>
    <property type="resolution" value="2.60 A"/>
    <property type="chains" value="G=1-71"/>
</dbReference>
<dbReference type="PDB" id="8DCS">
    <property type="method" value="EM"/>
    <property type="resolution" value="2.50 A"/>
    <property type="chains" value="G=1-71"/>
</dbReference>
<dbReference type="PDB" id="8EF5">
    <property type="method" value="EM"/>
    <property type="resolution" value="3.30 A"/>
    <property type="chains" value="C=1-68"/>
</dbReference>
<dbReference type="PDB" id="8EF6">
    <property type="method" value="EM"/>
    <property type="resolution" value="3.20 A"/>
    <property type="chains" value="C=1-68"/>
</dbReference>
<dbReference type="PDB" id="8EFB">
    <property type="method" value="EM"/>
    <property type="resolution" value="3.20 A"/>
    <property type="chains" value="C=1-68"/>
</dbReference>
<dbReference type="PDB" id="8EFO">
    <property type="method" value="EM"/>
    <property type="resolution" value="2.80 A"/>
    <property type="chains" value="C=1-68"/>
</dbReference>
<dbReference type="PDB" id="8EFQ">
    <property type="method" value="EM"/>
    <property type="resolution" value="3.30 A"/>
    <property type="chains" value="G=1-68"/>
</dbReference>
<dbReference type="PDB" id="8F7Q">
    <property type="method" value="EM"/>
    <property type="resolution" value="3.22 A"/>
    <property type="chains" value="C=1-68"/>
</dbReference>
<dbReference type="PDB" id="8F7R">
    <property type="method" value="EM"/>
    <property type="resolution" value="3.28 A"/>
    <property type="chains" value="C=1-68"/>
</dbReference>
<dbReference type="PDB" id="8F7S">
    <property type="method" value="EM"/>
    <property type="resolution" value="3.00 A"/>
    <property type="chains" value="C=1-68"/>
</dbReference>
<dbReference type="PDB" id="8F7W">
    <property type="method" value="EM"/>
    <property type="resolution" value="3.19 A"/>
    <property type="chains" value="C=1-68"/>
</dbReference>
<dbReference type="PDB" id="8F7X">
    <property type="method" value="EM"/>
    <property type="resolution" value="3.28 A"/>
    <property type="chains" value="C=1-68"/>
</dbReference>
<dbReference type="PDB" id="8GW8">
    <property type="method" value="EM"/>
    <property type="resolution" value="2.90 A"/>
    <property type="chains" value="G=1-67"/>
</dbReference>
<dbReference type="PDB" id="8HA0">
    <property type="method" value="EM"/>
    <property type="resolution" value="2.62 A"/>
    <property type="chains" value="G=1-71"/>
</dbReference>
<dbReference type="PDB" id="8HAF">
    <property type="method" value="EM"/>
    <property type="resolution" value="3.25 A"/>
    <property type="chains" value="G=1-71"/>
</dbReference>
<dbReference type="PDB" id="8HAO">
    <property type="method" value="EM"/>
    <property type="resolution" value="3.76 A"/>
    <property type="chains" value="E/G=1-71"/>
</dbReference>
<dbReference type="PDB" id="8HK2">
    <property type="method" value="EM"/>
    <property type="resolution" value="2.90 A"/>
    <property type="chains" value="G=2-68"/>
</dbReference>
<dbReference type="PDB" id="8HK3">
    <property type="method" value="EM"/>
    <property type="resolution" value="3.20 A"/>
    <property type="chains" value="G=2-68"/>
</dbReference>
<dbReference type="PDB" id="8HK5">
    <property type="method" value="EM"/>
    <property type="resolution" value="3.00 A"/>
    <property type="chains" value="G=2-68"/>
</dbReference>
<dbReference type="PDB" id="8INR">
    <property type="method" value="EM"/>
    <property type="resolution" value="2.73 A"/>
    <property type="chains" value="G=1-71"/>
</dbReference>
<dbReference type="PDB" id="8IOC">
    <property type="method" value="EM"/>
    <property type="resolution" value="2.86 A"/>
    <property type="chains" value="G=1-71"/>
</dbReference>
<dbReference type="PDB" id="8IOD">
    <property type="method" value="EM"/>
    <property type="resolution" value="2.59 A"/>
    <property type="chains" value="G=1-71"/>
</dbReference>
<dbReference type="PDB" id="8ITL">
    <property type="method" value="EM"/>
    <property type="resolution" value="3.23 A"/>
    <property type="chains" value="G=1-71"/>
</dbReference>
<dbReference type="PDB" id="8ITM">
    <property type="method" value="EM"/>
    <property type="resolution" value="3.13 A"/>
    <property type="chains" value="G=1-71"/>
</dbReference>
<dbReference type="PDB" id="8IU2">
    <property type="method" value="EM"/>
    <property type="resolution" value="3.35 A"/>
    <property type="chains" value="G=1-71"/>
</dbReference>
<dbReference type="PDB" id="8IY5">
    <property type="method" value="EM"/>
    <property type="resolution" value="2.80 A"/>
    <property type="chains" value="C=1-68"/>
</dbReference>
<dbReference type="PDB" id="8JBF">
    <property type="method" value="EM"/>
    <property type="resolution" value="3.00 A"/>
    <property type="chains" value="G=1-71"/>
</dbReference>
<dbReference type="PDB" id="8JBG">
    <property type="method" value="EM"/>
    <property type="resolution" value="2.80 A"/>
    <property type="chains" value="G=1-71"/>
</dbReference>
<dbReference type="PDB" id="8JBH">
    <property type="method" value="EM"/>
    <property type="resolution" value="2.90 A"/>
    <property type="chains" value="G=1-71"/>
</dbReference>
<dbReference type="PDB" id="8JIP">
    <property type="method" value="EM"/>
    <property type="resolution" value="2.85 A"/>
    <property type="chains" value="G=2-71"/>
</dbReference>
<dbReference type="PDB" id="8JIQ">
    <property type="method" value="EM"/>
    <property type="resolution" value="3.40 A"/>
    <property type="chains" value="C=2-71"/>
</dbReference>
<dbReference type="PDB" id="8JIR">
    <property type="method" value="EM"/>
    <property type="resolution" value="2.57 A"/>
    <property type="chains" value="G=2-71"/>
</dbReference>
<dbReference type="PDB" id="8JIS">
    <property type="method" value="EM"/>
    <property type="resolution" value="2.46 A"/>
    <property type="chains" value="G=6-62"/>
</dbReference>
<dbReference type="PDB" id="8JIT">
    <property type="method" value="EM"/>
    <property type="resolution" value="2.91 A"/>
    <property type="chains" value="C=2-71"/>
</dbReference>
<dbReference type="PDB" id="8JIU">
    <property type="method" value="EM"/>
    <property type="resolution" value="2.76 A"/>
    <property type="chains" value="C=2-71"/>
</dbReference>
<dbReference type="PDB" id="8SOC">
    <property type="method" value="EM"/>
    <property type="resolution" value="3.50 A"/>
    <property type="chains" value="G=1-71"/>
</dbReference>
<dbReference type="PDB" id="8SOD">
    <property type="method" value="EM"/>
    <property type="resolution" value="3.40 A"/>
    <property type="chains" value="D/F=1-71"/>
</dbReference>
<dbReference type="PDB" id="8SOE">
    <property type="method" value="EM"/>
    <property type="resolution" value="3.60 A"/>
    <property type="chains" value="D/F=1-71"/>
</dbReference>
<dbReference type="PDB" id="8WA3">
    <property type="method" value="EM"/>
    <property type="resolution" value="2.86 A"/>
    <property type="chains" value="G=1-71"/>
</dbReference>
<dbReference type="PDB" id="8WG7">
    <property type="method" value="EM"/>
    <property type="resolution" value="2.54 A"/>
    <property type="chains" value="G=1-71"/>
</dbReference>
<dbReference type="PDB" id="8WG8">
    <property type="method" value="EM"/>
    <property type="resolution" value="2.71 A"/>
    <property type="chains" value="G=1-71"/>
</dbReference>
<dbReference type="PDB" id="8WZ2">
    <property type="method" value="EM"/>
    <property type="resolution" value="2.73 A"/>
    <property type="chains" value="G=1-71"/>
</dbReference>
<dbReference type="PDB" id="8X16">
    <property type="method" value="EM"/>
    <property type="resolution" value="3.29 A"/>
    <property type="chains" value="C=1-71"/>
</dbReference>
<dbReference type="PDB" id="8X17">
    <property type="method" value="EM"/>
    <property type="resolution" value="3.19 A"/>
    <property type="chains" value="C=1-71"/>
</dbReference>
<dbReference type="PDB" id="8X9S">
    <property type="method" value="EM"/>
    <property type="resolution" value="3.49 A"/>
    <property type="chains" value="G=1-71"/>
</dbReference>
<dbReference type="PDB" id="8X9T">
    <property type="method" value="EM"/>
    <property type="resolution" value="2.75 A"/>
    <property type="chains" value="G=1-71"/>
</dbReference>
<dbReference type="PDB" id="8X9U">
    <property type="method" value="EM"/>
    <property type="resolution" value="2.88 A"/>
    <property type="chains" value="G=1-71"/>
</dbReference>
<dbReference type="PDB" id="8XBE">
    <property type="method" value="EM"/>
    <property type="resolution" value="3.40 A"/>
    <property type="chains" value="D=1-68"/>
</dbReference>
<dbReference type="PDB" id="8XBH">
    <property type="method" value="EM"/>
    <property type="resolution" value="2.83 A"/>
    <property type="chains" value="G=1-68"/>
</dbReference>
<dbReference type="PDB" id="8XGR">
    <property type="method" value="EM"/>
    <property type="resolution" value="3.20 A"/>
    <property type="chains" value="G=1-71"/>
</dbReference>
<dbReference type="PDB" id="8XOR">
    <property type="method" value="EM"/>
    <property type="resolution" value="3.00 A"/>
    <property type="chains" value="C=2-68"/>
</dbReference>
<dbReference type="PDB" id="8XOS">
    <property type="method" value="EM"/>
    <property type="resolution" value="3.20 A"/>
    <property type="chains" value="C=2-68"/>
</dbReference>
<dbReference type="PDB" id="8Y01">
    <property type="method" value="EM"/>
    <property type="resolution" value="2.48 A"/>
    <property type="chains" value="G=1-71"/>
</dbReference>
<dbReference type="PDB" id="8YFS">
    <property type="method" value="EM"/>
    <property type="resolution" value="2.80 A"/>
    <property type="chains" value="G=2-71"/>
</dbReference>
<dbReference type="PDB" id="8YK0">
    <property type="method" value="EM"/>
    <property type="resolution" value="2.40 A"/>
    <property type="chains" value="G=7-63"/>
</dbReference>
<dbReference type="PDB" id="8YKV">
    <property type="method" value="EM"/>
    <property type="resolution" value="2.48 A"/>
    <property type="chains" value="G=1-71"/>
</dbReference>
<dbReference type="PDB" id="8YKW">
    <property type="method" value="EM"/>
    <property type="resolution" value="2.75 A"/>
    <property type="chains" value="G=1-71"/>
</dbReference>
<dbReference type="PDB" id="8YKX">
    <property type="method" value="EM"/>
    <property type="resolution" value="2.69 A"/>
    <property type="chains" value="G=1-71"/>
</dbReference>
<dbReference type="PDB" id="8ZCJ">
    <property type="method" value="EM"/>
    <property type="resolution" value="3.09 A"/>
    <property type="chains" value="D=1-71"/>
</dbReference>
<dbReference type="PDB" id="8ZH8">
    <property type="method" value="EM"/>
    <property type="resolution" value="3.19 A"/>
    <property type="chains" value="G=1-67"/>
</dbReference>
<dbReference type="PDB" id="9CBL">
    <property type="method" value="EM"/>
    <property type="resolution" value="2.80 A"/>
    <property type="chains" value="G=1-71"/>
</dbReference>
<dbReference type="PDB" id="9CBM">
    <property type="method" value="EM"/>
    <property type="resolution" value="3.20 A"/>
    <property type="chains" value="G=1-71"/>
</dbReference>
<dbReference type="PDB" id="9IJD">
    <property type="method" value="EM"/>
    <property type="resolution" value="2.76 A"/>
    <property type="chains" value="C=10-61"/>
</dbReference>
<dbReference type="PDB" id="9IJE">
    <property type="method" value="EM"/>
    <property type="resolution" value="2.34 A"/>
    <property type="chains" value="C=10-61"/>
</dbReference>
<dbReference type="PDB" id="9J1P">
    <property type="method" value="EM"/>
    <property type="resolution" value="2.99 A"/>
    <property type="chains" value="G=2-71"/>
</dbReference>
<dbReference type="PDB" id="9JR2">
    <property type="method" value="EM"/>
    <property type="resolution" value="2.80 A"/>
    <property type="chains" value="G=2-67"/>
</dbReference>
<dbReference type="PDB" id="9JR3">
    <property type="method" value="EM"/>
    <property type="resolution" value="2.80 A"/>
    <property type="chains" value="G=1-67"/>
</dbReference>
<dbReference type="PDBsum" id="1GG2"/>
<dbReference type="PDBsum" id="1GP2"/>
<dbReference type="PDBsum" id="1OMW"/>
<dbReference type="PDBsum" id="1XHM"/>
<dbReference type="PDBsum" id="2BCJ"/>
<dbReference type="PDBsum" id="3AH8"/>
<dbReference type="PDBsum" id="3CIK"/>
<dbReference type="PDBsum" id="3KRW"/>
<dbReference type="PDBsum" id="3KRX"/>
<dbReference type="PDBsum" id="3PSC"/>
<dbReference type="PDBsum" id="3PVU"/>
<dbReference type="PDBsum" id="3PVW"/>
<dbReference type="PDBsum" id="3SN6"/>
<dbReference type="PDBsum" id="3UZS"/>
<dbReference type="PDBsum" id="3V5W"/>
<dbReference type="PDBsum" id="4MK0"/>
<dbReference type="PDBsum" id="4PNK"/>
<dbReference type="PDBsum" id="5TDH"/>
<dbReference type="PDBsum" id="5VAI"/>
<dbReference type="PDBsum" id="5WG3"/>
<dbReference type="PDBsum" id="5WG4"/>
<dbReference type="PDBsum" id="5WG5"/>
<dbReference type="PDBsum" id="6C2Y"/>
<dbReference type="PDBsum" id="6CMO"/>
<dbReference type="PDBsum" id="6LPB"/>
<dbReference type="PDBsum" id="6NBF"/>
<dbReference type="PDBsum" id="6NBH"/>
<dbReference type="PDBsum" id="6NBI"/>
<dbReference type="PDBsum" id="6PCV"/>
<dbReference type="PDBsum" id="6U7C"/>
<dbReference type="PDBsum" id="7BW0"/>
<dbReference type="PDBsum" id="7BZ2"/>
<dbReference type="PDBsum" id="7CZ5"/>
<dbReference type="PDBsum" id="7D3S"/>
<dbReference type="PDBsum" id="7D68"/>
<dbReference type="PDBsum" id="7DB6"/>
<dbReference type="PDBsum" id="7DH5"/>
<dbReference type="PDBsum" id="7DHI"/>
<dbReference type="PDBsum" id="7DHR"/>
<dbReference type="PDBsum" id="7DTY"/>
<dbReference type="PDBsum" id="7DUQ"/>
<dbReference type="PDBsum" id="7DUR"/>
<dbReference type="PDBsum" id="7DW9"/>
<dbReference type="PDBsum" id="7EIB"/>
<dbReference type="PDBsum" id="7EQ1"/>
<dbReference type="PDBsum" id="7EVM"/>
<dbReference type="PDBsum" id="7F16"/>
<dbReference type="PDBsum" id="7F2O"/>
<dbReference type="PDBsum" id="7FIG"/>
<dbReference type="PDBsum" id="7FIH"/>
<dbReference type="PDBsum" id="7FII"/>
<dbReference type="PDBsum" id="7FIM"/>
<dbReference type="PDBsum" id="7FIN"/>
<dbReference type="PDBsum" id="7FIY"/>
<dbReference type="PDBsum" id="7JJO"/>
<dbReference type="PDBsum" id="7LJC"/>
<dbReference type="PDBsum" id="7LJD"/>
<dbReference type="PDBsum" id="7PIU"/>
<dbReference type="PDBsum" id="7PWD"/>
<dbReference type="PDBsum" id="7S0F"/>
<dbReference type="PDBsum" id="7S0G"/>
<dbReference type="PDBsum" id="7SQO"/>
<dbReference type="PDBsum" id="7T6S"/>
<dbReference type="PDBsum" id="7T6T"/>
<dbReference type="PDBsum" id="7T6U"/>
<dbReference type="PDBsum" id="7T6V"/>
<dbReference type="PDBsum" id="7TD0"/>
<dbReference type="PDBsum" id="7TD1"/>
<dbReference type="PDBsum" id="7TD2"/>
<dbReference type="PDBsum" id="7TD3"/>
<dbReference type="PDBsum" id="7TD4"/>
<dbReference type="PDBsum" id="7V35"/>
<dbReference type="PDBsum" id="7V9L"/>
<dbReference type="PDBsum" id="7V9M"/>
<dbReference type="PDBsum" id="7VAB"/>
<dbReference type="PDBsum" id="7VBH"/>
<dbReference type="PDBsum" id="7VBI"/>
<dbReference type="PDBsum" id="7VGY"/>
<dbReference type="PDBsum" id="7VGZ"/>
<dbReference type="PDBsum" id="7VQX"/>
<dbReference type="PDBsum" id="7VVJ"/>
<dbReference type="PDBsum" id="7VVK"/>
<dbReference type="PDBsum" id="7VVL"/>
<dbReference type="PDBsum" id="7VVM"/>
<dbReference type="PDBsum" id="7VVN"/>
<dbReference type="PDBsum" id="7VVO"/>
<dbReference type="PDBsum" id="7WBJ"/>
<dbReference type="PDBsum" id="7WIC"/>
<dbReference type="PDBsum" id="7WIG"/>
<dbReference type="PDBsum" id="7WQ3"/>
<dbReference type="PDBsum" id="7WQ4"/>
<dbReference type="PDBsum" id="7X1T"/>
<dbReference type="PDBsum" id="7X1U"/>
<dbReference type="PDBsum" id="7XAT"/>
<dbReference type="PDBsum" id="7XAU"/>
<dbReference type="PDBsum" id="7XAV"/>
<dbReference type="PDBsum" id="7XJH"/>
<dbReference type="PDBsum" id="7XJI"/>
<dbReference type="PDBsum" id="7XW9"/>
<dbReference type="PDBsum" id="7XWO"/>
<dbReference type="PDBsum" id="7Y35"/>
<dbReference type="PDBsum" id="7Y36"/>
<dbReference type="PDBsum" id="7YJ4"/>
<dbReference type="PDBsum" id="7YK6"/>
<dbReference type="PDBsum" id="7YK7"/>
<dbReference type="PDBsum" id="7YU3"/>
<dbReference type="PDBsum" id="7YU5"/>
<dbReference type="PDBsum" id="7YU6"/>
<dbReference type="PDBsum" id="7YU7"/>
<dbReference type="PDBsum" id="7YU8"/>
<dbReference type="PDBsum" id="8DCR"/>
<dbReference type="PDBsum" id="8DCS"/>
<dbReference type="PDBsum" id="8EF5"/>
<dbReference type="PDBsum" id="8EF6"/>
<dbReference type="PDBsum" id="8EFB"/>
<dbReference type="PDBsum" id="8EFO"/>
<dbReference type="PDBsum" id="8EFQ"/>
<dbReference type="PDBsum" id="8F7Q"/>
<dbReference type="PDBsum" id="8F7R"/>
<dbReference type="PDBsum" id="8F7S"/>
<dbReference type="PDBsum" id="8F7W"/>
<dbReference type="PDBsum" id="8F7X"/>
<dbReference type="PDBsum" id="8GW8"/>
<dbReference type="PDBsum" id="8HA0"/>
<dbReference type="PDBsum" id="8HAF"/>
<dbReference type="PDBsum" id="8HAO"/>
<dbReference type="PDBsum" id="8HK2"/>
<dbReference type="PDBsum" id="8HK3"/>
<dbReference type="PDBsum" id="8HK5"/>
<dbReference type="PDBsum" id="8INR"/>
<dbReference type="PDBsum" id="8IOC"/>
<dbReference type="PDBsum" id="8IOD"/>
<dbReference type="PDBsum" id="8ITL"/>
<dbReference type="PDBsum" id="8ITM"/>
<dbReference type="PDBsum" id="8IU2"/>
<dbReference type="PDBsum" id="8IY5"/>
<dbReference type="PDBsum" id="8JBF"/>
<dbReference type="PDBsum" id="8JBG"/>
<dbReference type="PDBsum" id="8JBH"/>
<dbReference type="PDBsum" id="8JIP"/>
<dbReference type="PDBsum" id="8JIQ"/>
<dbReference type="PDBsum" id="8JIR"/>
<dbReference type="PDBsum" id="8JIS"/>
<dbReference type="PDBsum" id="8JIT"/>
<dbReference type="PDBsum" id="8JIU"/>
<dbReference type="PDBsum" id="8SOC"/>
<dbReference type="PDBsum" id="8SOD"/>
<dbReference type="PDBsum" id="8SOE"/>
<dbReference type="PDBsum" id="8WA3"/>
<dbReference type="PDBsum" id="8WG7"/>
<dbReference type="PDBsum" id="8WG8"/>
<dbReference type="PDBsum" id="8WZ2"/>
<dbReference type="PDBsum" id="8X16"/>
<dbReference type="PDBsum" id="8X17"/>
<dbReference type="PDBsum" id="8X9S"/>
<dbReference type="PDBsum" id="8X9T"/>
<dbReference type="PDBsum" id="8X9U"/>
<dbReference type="PDBsum" id="8XBE"/>
<dbReference type="PDBsum" id="8XBH"/>
<dbReference type="PDBsum" id="8XGR"/>
<dbReference type="PDBsum" id="8XOR"/>
<dbReference type="PDBsum" id="8XOS"/>
<dbReference type="PDBsum" id="8Y01"/>
<dbReference type="PDBsum" id="8YFS"/>
<dbReference type="PDBsum" id="8YK0"/>
<dbReference type="PDBsum" id="8YKV"/>
<dbReference type="PDBsum" id="8YKW"/>
<dbReference type="PDBsum" id="8YKX"/>
<dbReference type="PDBsum" id="8ZCJ"/>
<dbReference type="PDBsum" id="8ZH8"/>
<dbReference type="PDBsum" id="9CBL"/>
<dbReference type="PDBsum" id="9CBM"/>
<dbReference type="PDBsum" id="9IJD"/>
<dbReference type="PDBsum" id="9IJE"/>
<dbReference type="PDBsum" id="9J1P"/>
<dbReference type="PDBsum" id="9JR2"/>
<dbReference type="PDBsum" id="9JR3"/>
<dbReference type="EMDB" id="EMD-0410"/>
<dbReference type="EMDB" id="EMD-0411"/>
<dbReference type="EMDB" id="EMD-0412"/>
<dbReference type="EMDB" id="EMD-0940"/>
<dbReference type="EMDB" id="EMD-13453"/>
<dbReference type="EMDB" id="EMD-20308"/>
<dbReference type="EMDB" id="EMD-22357"/>
<dbReference type="EMDB" id="EMD-23390"/>
<dbReference type="EMDB" id="EMD-23391"/>
<dbReference type="EMDB" id="EMD-24789"/>
<dbReference type="EMDB" id="EMD-24790"/>
<dbReference type="EMDB" id="EMD-25389"/>
<dbReference type="EMDB" id="EMD-25726"/>
<dbReference type="EMDB" id="EMD-25727"/>
<dbReference type="EMDB" id="EMD-25728"/>
<dbReference type="EMDB" id="EMD-25729"/>
<dbReference type="EMDB" id="EMD-25819"/>
<dbReference type="EMDB" id="EMD-25820"/>
<dbReference type="EMDB" id="EMD-25821"/>
<dbReference type="EMDB" id="EMD-25822"/>
<dbReference type="EMDB" id="EMD-25823"/>
<dbReference type="EMDB" id="EMD-27328"/>
<dbReference type="EMDB" id="EMD-27329"/>
<dbReference type="EMDB" id="EMD-28066"/>
<dbReference type="EMDB" id="EMD-28069"/>
<dbReference type="EMDB" id="EMD-28077"/>
<dbReference type="EMDB" id="EMD-28086"/>
<dbReference type="EMDB" id="EMD-28088"/>
<dbReference type="EMDB" id="EMD-28907"/>
<dbReference type="EMDB" id="EMD-28908"/>
<dbReference type="EMDB" id="EMD-28909"/>
<dbReference type="EMDB" id="EMD-28911"/>
<dbReference type="EMDB" id="EMD-28912"/>
<dbReference type="EMDB" id="EMD-30221"/>
<dbReference type="EMDB" id="EMD-30249"/>
<dbReference type="EMDB" id="EMD-30505"/>
<dbReference type="EMDB" id="EMD-30566"/>
<dbReference type="EMDB" id="EMD-30590"/>
<dbReference type="EMDB" id="EMD-30627"/>
<dbReference type="EMDB" id="EMD-30678"/>
<dbReference type="EMDB" id="EMD-30681"/>
<dbReference type="EMDB" id="EMD-30682"/>
<dbReference type="EMDB" id="EMD-30860"/>
<dbReference type="EMDB" id="EMD-30866"/>
<dbReference type="EMDB" id="EMD-30867"/>
<dbReference type="EMDB" id="EMD-30877"/>
<dbReference type="EMDB" id="EMD-31145"/>
<dbReference type="EMDB" id="EMD-31254"/>
<dbReference type="EMDB" id="EMD-31329"/>
<dbReference type="EMDB" id="EMD-31405"/>
<dbReference type="EMDB" id="EMD-31429"/>
<dbReference type="EMDB" id="EMD-31596"/>
<dbReference type="EMDB" id="EMD-31597"/>
<dbReference type="EMDB" id="EMD-31598"/>
<dbReference type="EMDB" id="EMD-31603"/>
<dbReference type="EMDB" id="EMD-31604"/>
<dbReference type="EMDB" id="EMD-31606"/>
<dbReference type="EMDB" id="EMD-31676"/>
<dbReference type="EMDB" id="EMD-31824"/>
<dbReference type="EMDB" id="EMD-31825"/>
<dbReference type="EMDB" id="EMD-31836"/>
<dbReference type="EMDB" id="EMD-31879"/>
<dbReference type="EMDB" id="EMD-31880"/>
<dbReference type="EMDB" id="EMD-31980"/>
<dbReference type="EMDB" id="EMD-31981"/>
<dbReference type="EMDB" id="EMD-32095"/>
<dbReference type="EMDB" id="EMD-32141"/>
<dbReference type="EMDB" id="EMD-32142"/>
<dbReference type="EMDB" id="EMD-32143"/>
<dbReference type="EMDB" id="EMD-32144"/>
<dbReference type="EMDB" id="EMD-32145"/>
<dbReference type="EMDB" id="EMD-32146"/>
<dbReference type="EMDB" id="EMD-32401"/>
<dbReference type="EMDB" id="EMD-32528"/>
<dbReference type="EMDB" id="EMD-32529"/>
<dbReference type="EMDB" id="EMD-32698"/>
<dbReference type="EMDB" id="EMD-32699"/>
<dbReference type="EMDB" id="EMD-32949"/>
<dbReference type="EMDB" id="EMD-32950"/>
<dbReference type="EMDB" id="EMD-33098"/>
<dbReference type="EMDB" id="EMD-33099"/>
<dbReference type="EMDB" id="EMD-33100"/>
<dbReference type="EMDB" id="EMD-33227"/>
<dbReference type="EMDB" id="EMD-33228"/>
<dbReference type="EMDB" id="EMD-33494"/>
<dbReference type="EMDB" id="EMD-33497"/>
<dbReference type="EMDB" id="EMD-33588"/>
<dbReference type="EMDB" id="EMD-33590"/>
<dbReference type="EMDB" id="EMD-33871"/>
<dbReference type="EMDB" id="EMD-33888"/>
<dbReference type="EMDB" id="EMD-33889"/>
<dbReference type="EMDB" id="EMD-34097"/>
<dbReference type="EMDB" id="EMD-34099"/>
<dbReference type="EMDB" id="EMD-34100"/>
<dbReference type="EMDB" id="EMD-34101"/>
<dbReference type="EMDB" id="EMD-34102"/>
<dbReference type="EMDB" id="EMD-34305"/>
<dbReference type="EMDB" id="EMD-34585"/>
<dbReference type="EMDB" id="EMD-34587"/>
<dbReference type="EMDB" id="EMD-34598"/>
<dbReference type="EMDB" id="EMD-34842"/>
<dbReference type="EMDB" id="EMD-34843"/>
<dbReference type="EMDB" id="EMD-35601"/>
<dbReference type="EMDB" id="EMD-35615"/>
<dbReference type="EMDB" id="EMD-35616"/>
<dbReference type="EMDB" id="EMD-35706"/>
<dbReference type="EMDB" id="EMD-35707"/>
<dbReference type="EMDB" id="EMD-35714"/>
<dbReference type="EMDB" id="EMD-35814"/>
<dbReference type="EMDB" id="EMD-36144"/>
<dbReference type="EMDB" id="EMD-36145"/>
<dbReference type="EMDB" id="EMD-36146"/>
<dbReference type="EMDB" id="EMD-36323"/>
<dbReference type="EMDB" id="EMD-36324"/>
<dbReference type="EMDB" id="EMD-36325"/>
<dbReference type="EMDB" id="EMD-36326"/>
<dbReference type="EMDB" id="EMD-36327"/>
<dbReference type="EMDB" id="EMD-36328"/>
<dbReference type="EMDB" id="EMD-37390"/>
<dbReference type="EMDB" id="EMD-37504"/>
<dbReference type="EMDB" id="EMD-37505"/>
<dbReference type="EMDB" id="EMD-37944"/>
<dbReference type="EMDB" id="EMD-37985"/>
<dbReference type="EMDB" id="EMD-37986"/>
<dbReference type="EMDB" id="EMD-38183"/>
<dbReference type="EMDB" id="EMD-38184"/>
<dbReference type="EMDB" id="EMD-38185"/>
<dbReference type="EMDB" id="EMD-38215"/>
<dbReference type="EMDB" id="EMD-38218"/>
<dbReference type="EMDB" id="EMD-38330"/>
<dbReference type="EMDB" id="EMD-38538"/>
<dbReference type="EMDB" id="EMD-38539"/>
<dbReference type="EMDB" id="EMD-38800"/>
<dbReference type="EMDB" id="EMD-39228"/>
<dbReference type="EMDB" id="EMD-39356"/>
<dbReference type="EMDB" id="EMD-39373"/>
<dbReference type="EMDB" id="EMD-39374"/>
<dbReference type="EMDB" id="EMD-39375"/>
<dbReference type="EMDB" id="EMD-39931"/>
<dbReference type="EMDB" id="EMD-40653"/>
<dbReference type="EMDB" id="EMD-40654"/>
<dbReference type="EMDB" id="EMD-40655"/>
<dbReference type="EMDB" id="EMD-45425"/>
<dbReference type="EMDB" id="EMD-45426"/>
<dbReference type="EMDB" id="EMD-60096"/>
<dbReference type="EMDB" id="EMD-60628"/>
<dbReference type="EMDB" id="EMD-60629"/>
<dbReference type="EMDB" id="EMD-61077"/>
<dbReference type="EMDB" id="EMD-61746"/>
<dbReference type="EMDB" id="EMD-61747"/>
<dbReference type="EMDB" id="EMD-7517"/>
<dbReference type="EMDB" id="EMD-8653"/>
<dbReference type="SMR" id="P63212"/>
<dbReference type="BioGRID" id="158562">
    <property type="interactions" value="1"/>
</dbReference>
<dbReference type="CORUM" id="P63212"/>
<dbReference type="DIP" id="DIP-586N"/>
<dbReference type="FunCoup" id="P63212">
    <property type="interactions" value="2055"/>
</dbReference>
<dbReference type="IntAct" id="P63212">
    <property type="interactions" value="7"/>
</dbReference>
<dbReference type="STRING" id="9913.ENSBTAP00000003959"/>
<dbReference type="iPTMnet" id="P63212"/>
<dbReference type="PaxDb" id="9913-ENSBTAP00000003959"/>
<dbReference type="PeptideAtlas" id="P63212"/>
<dbReference type="Ensembl" id="ENSBTAT00000003959.4">
    <property type="protein sequence ID" value="ENSBTAP00000003959.3"/>
    <property type="gene ID" value="ENSBTAG00000003043.5"/>
</dbReference>
<dbReference type="GeneID" id="281203"/>
<dbReference type="KEGG" id="bta:281203"/>
<dbReference type="CTD" id="54331"/>
<dbReference type="VEuPathDB" id="HostDB:ENSBTAG00000003043"/>
<dbReference type="VGNC" id="VGNC:29465">
    <property type="gene designation" value="GNG2"/>
</dbReference>
<dbReference type="eggNOG" id="KOG4119">
    <property type="taxonomic scope" value="Eukaryota"/>
</dbReference>
<dbReference type="GeneTree" id="ENSGT01100000263497"/>
<dbReference type="HOGENOM" id="CLU_168377_0_1_1"/>
<dbReference type="InParanoid" id="P63212"/>
<dbReference type="OMA" id="GKQQPPM"/>
<dbReference type="OrthoDB" id="9717228at2759"/>
<dbReference type="TreeFam" id="TF319909"/>
<dbReference type="Reactome" id="R-BTA-1296041">
    <property type="pathway name" value="Activation of G protein gated Potassium channels"/>
</dbReference>
<dbReference type="Reactome" id="R-BTA-202040">
    <property type="pathway name" value="G-protein activation"/>
</dbReference>
<dbReference type="Reactome" id="R-BTA-381676">
    <property type="pathway name" value="Glucagon-like Peptide-1 (GLP1) regulates insulin secretion"/>
</dbReference>
<dbReference type="Reactome" id="R-BTA-392170">
    <property type="pathway name" value="ADP signalling through P2Y purinoceptor 12"/>
</dbReference>
<dbReference type="Reactome" id="R-BTA-392451">
    <property type="pathway name" value="G beta:gamma signalling through PI3Kgamma"/>
</dbReference>
<dbReference type="Reactome" id="R-BTA-392851">
    <property type="pathway name" value="Prostacyclin signalling through prostacyclin receptor"/>
</dbReference>
<dbReference type="Reactome" id="R-BTA-400042">
    <property type="pathway name" value="Adrenaline,noradrenaline inhibits insulin secretion"/>
</dbReference>
<dbReference type="Reactome" id="R-BTA-4086398">
    <property type="pathway name" value="Ca2+ pathway"/>
</dbReference>
<dbReference type="Reactome" id="R-BTA-416476">
    <property type="pathway name" value="G alpha (q) signalling events"/>
</dbReference>
<dbReference type="Reactome" id="R-BTA-416482">
    <property type="pathway name" value="G alpha (12/13) signalling events"/>
</dbReference>
<dbReference type="Reactome" id="R-BTA-418217">
    <property type="pathway name" value="G beta:gamma signalling through PLC beta"/>
</dbReference>
<dbReference type="Reactome" id="R-BTA-418555">
    <property type="pathway name" value="G alpha (s) signalling events"/>
</dbReference>
<dbReference type="Reactome" id="R-BTA-418592">
    <property type="pathway name" value="ADP signalling through P2Y purinoceptor 1"/>
</dbReference>
<dbReference type="Reactome" id="R-BTA-418594">
    <property type="pathway name" value="G alpha (i) signalling events"/>
</dbReference>
<dbReference type="Reactome" id="R-BTA-418597">
    <property type="pathway name" value="G alpha (z) signalling events"/>
</dbReference>
<dbReference type="Reactome" id="R-BTA-420092">
    <property type="pathway name" value="Glucagon-type ligand receptors"/>
</dbReference>
<dbReference type="Reactome" id="R-BTA-428930">
    <property type="pathway name" value="Thromboxane signalling through TP receptor"/>
</dbReference>
<dbReference type="Reactome" id="R-BTA-432040">
    <property type="pathway name" value="Vasopressin regulates renal water homeostasis via Aquaporins"/>
</dbReference>
<dbReference type="Reactome" id="R-BTA-456926">
    <property type="pathway name" value="Thrombin signalling through proteinase activated receptors (PARs)"/>
</dbReference>
<dbReference type="Reactome" id="R-BTA-500657">
    <property type="pathway name" value="Presynaptic function of Kainate receptors"/>
</dbReference>
<dbReference type="Reactome" id="R-BTA-6814122">
    <property type="pathway name" value="Cooperation of PDCL (PhLP1) and TRiC/CCT in G-protein beta folding"/>
</dbReference>
<dbReference type="Reactome" id="R-BTA-8964315">
    <property type="pathway name" value="G beta:gamma signalling through BTK"/>
</dbReference>
<dbReference type="Reactome" id="R-BTA-8964616">
    <property type="pathway name" value="G beta:gamma signalling through CDC42"/>
</dbReference>
<dbReference type="Reactome" id="R-BTA-9009391">
    <property type="pathway name" value="Extra-nuclear estrogen signaling"/>
</dbReference>
<dbReference type="Reactome" id="R-BTA-9856530">
    <property type="pathway name" value="High laminar flow shear stress activates signaling by PIEZO1 and PECAM1:CDH5:KDR in endothelial cells"/>
</dbReference>
<dbReference type="Reactome" id="R-BTA-997272">
    <property type="pathway name" value="Inhibition of voltage gated Ca2+ channels via Gbeta/gamma subunits"/>
</dbReference>
<dbReference type="EvolutionaryTrace" id="P63212"/>
<dbReference type="Proteomes" id="UP000009136">
    <property type="component" value="Chromosome 10"/>
</dbReference>
<dbReference type="Bgee" id="ENSBTAG00000003043">
    <property type="expression patterns" value="Expressed in omental fat pad and 104 other cell types or tissues"/>
</dbReference>
<dbReference type="GO" id="GO:0005834">
    <property type="term" value="C:heterotrimeric G-protein complex"/>
    <property type="evidence" value="ECO:0000314"/>
    <property type="project" value="BHF-UCL"/>
</dbReference>
<dbReference type="GO" id="GO:0016020">
    <property type="term" value="C:membrane"/>
    <property type="evidence" value="ECO:0000314"/>
    <property type="project" value="BHF-UCL"/>
</dbReference>
<dbReference type="GO" id="GO:0005886">
    <property type="term" value="C:plasma membrane"/>
    <property type="evidence" value="ECO:0000304"/>
    <property type="project" value="Reactome"/>
</dbReference>
<dbReference type="GO" id="GO:0031681">
    <property type="term" value="F:G-protein beta-subunit binding"/>
    <property type="evidence" value="ECO:0000250"/>
    <property type="project" value="CAFA"/>
</dbReference>
<dbReference type="GO" id="GO:0003924">
    <property type="term" value="F:GTPase activity"/>
    <property type="evidence" value="ECO:0000314"/>
    <property type="project" value="MGI"/>
</dbReference>
<dbReference type="GO" id="GO:0007191">
    <property type="term" value="P:adenylate cyclase-activating dopamine receptor signaling pathway"/>
    <property type="evidence" value="ECO:0000314"/>
    <property type="project" value="BHF-UCL"/>
</dbReference>
<dbReference type="GO" id="GO:0071870">
    <property type="term" value="P:cellular response to catecholamine stimulus"/>
    <property type="evidence" value="ECO:0000314"/>
    <property type="project" value="BHF-UCL"/>
</dbReference>
<dbReference type="GO" id="GO:0071380">
    <property type="term" value="P:cellular response to prostaglandin E stimulus"/>
    <property type="evidence" value="ECO:0000314"/>
    <property type="project" value="BHF-UCL"/>
</dbReference>
<dbReference type="GO" id="GO:0007186">
    <property type="term" value="P:G protein-coupled receptor signaling pathway"/>
    <property type="evidence" value="ECO:0000314"/>
    <property type="project" value="MGI"/>
</dbReference>
<dbReference type="CDD" id="cd00068">
    <property type="entry name" value="GGL"/>
    <property type="match status" value="1"/>
</dbReference>
<dbReference type="FunFam" id="4.10.260.10:FF:000001">
    <property type="entry name" value="Guanine nucleotide-binding protein subunit gamma"/>
    <property type="match status" value="1"/>
</dbReference>
<dbReference type="Gene3D" id="4.10.260.10">
    <property type="entry name" value="Transducin (heterotrimeric G protein), gamma chain"/>
    <property type="match status" value="1"/>
</dbReference>
<dbReference type="InterPro" id="IPR015898">
    <property type="entry name" value="G-protein_gamma-like_dom"/>
</dbReference>
<dbReference type="InterPro" id="IPR036284">
    <property type="entry name" value="GGL_sf"/>
</dbReference>
<dbReference type="InterPro" id="IPR001770">
    <property type="entry name" value="Gprotein-gamma"/>
</dbReference>
<dbReference type="PANTHER" id="PTHR13809">
    <property type="entry name" value="GUANINE NUCLEOTIDE-BINDING PROTEIN GAMMA SUBUNIT"/>
    <property type="match status" value="1"/>
</dbReference>
<dbReference type="Pfam" id="PF00631">
    <property type="entry name" value="G-gamma"/>
    <property type="match status" value="1"/>
</dbReference>
<dbReference type="PRINTS" id="PR00321">
    <property type="entry name" value="GPROTEING"/>
</dbReference>
<dbReference type="SMART" id="SM01224">
    <property type="entry name" value="G_gamma"/>
    <property type="match status" value="1"/>
</dbReference>
<dbReference type="SMART" id="SM00224">
    <property type="entry name" value="GGL"/>
    <property type="match status" value="1"/>
</dbReference>
<dbReference type="SUPFAM" id="SSF48670">
    <property type="entry name" value="Transducin (heterotrimeric G protein), gamma chain"/>
    <property type="match status" value="1"/>
</dbReference>
<dbReference type="PROSITE" id="PS50058">
    <property type="entry name" value="G_PROTEIN_GAMMA"/>
    <property type="match status" value="1"/>
</dbReference>
<reference key="1">
    <citation type="journal article" date="1989" name="J. Biol. Chem.">
        <title>Existence of two gamma subunits of the G proteins in brain.</title>
        <authorList>
            <person name="Robishaw J.D."/>
            <person name="Kalman V.K."/>
            <person name="Moomaw C.R."/>
            <person name="Slaughter C.A."/>
        </authorList>
    </citation>
    <scope>NUCLEOTIDE SEQUENCE [MRNA]</scope>
    <scope>PROTEIN SEQUENCE OF 14-62</scope>
    <source>
        <tissue>Adrenal gland</tissue>
        <tissue>Brain</tissue>
    </source>
</reference>
<reference key="2">
    <citation type="journal article" date="1989" name="Science">
        <title>A G protein gamma subunit shares homology with ras proteins.</title>
        <authorList>
            <person name="Gautam N."/>
            <person name="Baetscher M."/>
            <person name="Aebersold R."/>
            <person name="Simon M.I."/>
        </authorList>
    </citation>
    <scope>NUCLEOTIDE SEQUENCE [MRNA]</scope>
</reference>
<reference key="3">
    <citation type="submission" date="2006-01" db="EMBL/GenBank/DDBJ databases">
        <authorList>
            <consortium name="NIH - Mammalian Gene Collection (MGC) project"/>
        </authorList>
    </citation>
    <scope>NUCLEOTIDE SEQUENCE [LARGE SCALE MRNA]</scope>
    <source>
        <strain>Hereford</strain>
        <tissue>Kidney</tissue>
    </source>
</reference>
<reference key="4">
    <citation type="journal article" date="1995" name="Biochem. Biophys. Res. Commun.">
        <title>Determination of the complete covalent structure of the gamma 2 subunit of bovine brain G proteins by mass spectrometry.</title>
        <authorList>
            <person name="Wilcox M.D."/>
            <person name="Schey K.L."/>
            <person name="Busman M."/>
            <person name="Hildebrandt J.D."/>
        </authorList>
    </citation>
    <scope>PROTEIN SEQUENCE OF 2-68</scope>
    <scope>ACETYLATION AT ALA-2</scope>
    <scope>ISOPRENYLATION AT CYS-68</scope>
    <source>
        <tissue>Brain</tissue>
    </source>
</reference>
<reference key="5">
    <citation type="journal article" date="1993" name="Biochem. Biophys. Res. Commun.">
        <title>Identification of a novel gamma-subunit from bovine brain GTP binding regulatory proteins (Gi/o).</title>
        <authorList>
            <person name="Sohma H."/>
            <person name="Hashimoto H."/>
            <person name="Hiraike N."/>
            <person name="Ohguro H."/>
            <person name="Akino T."/>
        </authorList>
    </citation>
    <scope>PROTEIN SEQUENCE OF 2-64</scope>
    <source>
        <tissue>Brain</tissue>
    </source>
</reference>
<reference key="6">
    <citation type="journal article" date="1991" name="J. Biol. Chem.">
        <title>Gamma-subunits of G proteins, but not their alpha- or beta-subunits, are polyisoprenylated. Studies on post-translational modifications using in vitro translation with rabbit reticulocyte lysates.</title>
        <authorList>
            <person name="Sanford J."/>
            <person name="Codina J."/>
            <person name="Birnbaumer L."/>
        </authorList>
    </citation>
    <scope>ISOPRENYLATION AT CYS-68</scope>
    <scope>METHYLATION AT CYS-68</scope>
</reference>
<reference key="7">
    <citation type="journal article" date="1995" name="Cell">
        <title>The structure of the G protein heterotrimer Gi alpha 1 beta 1 gamma 2.</title>
        <authorList>
            <person name="Wall M.A."/>
            <person name="Coleman D.E."/>
            <person name="Lee E."/>
            <person name="Iniguez-Lluhi J.A."/>
            <person name="Posner B.A."/>
            <person name="Gilman A.G."/>
            <person name="Sprang S.R."/>
        </authorList>
    </citation>
    <scope>X-RAY CRYSTALLOGRAPHY (2.3 ANGSTROMS) OF HETEROTRIMER</scope>
</reference>
<reference key="8">
    <citation type="journal article" date="2003" name="Science">
        <title>Keeping G proteins at bay: a complex between G protein-coupled receptor kinase 2 and Gbetagamma.</title>
        <authorList>
            <person name="Lodowski D.T."/>
            <person name="Pitcher J.A."/>
            <person name="Capel W.D."/>
            <person name="Lefkowitz R.J."/>
            <person name="Tesmer J.J."/>
        </authorList>
    </citation>
    <scope>X-RAY CRYSTALLOGRAPHY (2.5 ANGSTROMS) OF 1-68 IN COMPLEX WITH GNB1 AND GRK2</scope>
    <scope>SUBCELLULAR LOCATION</scope>
    <scope>ISOPRENYLATION AT CYS-68</scope>
</reference>
<accession>P63212</accession>
<accession>P16874</accession>
<accession>Q2KI31</accession>
<accession>Q61013</accession>
<accession>Q9TS47</accession>
<gene>
    <name type="primary">GNG2</name>
</gene>
<keyword id="KW-0002">3D-structure</keyword>
<keyword id="KW-0007">Acetylation</keyword>
<keyword id="KW-1003">Cell membrane</keyword>
<keyword id="KW-0903">Direct protein sequencing</keyword>
<keyword id="KW-0449">Lipoprotein</keyword>
<keyword id="KW-0472">Membrane</keyword>
<keyword id="KW-0488">Methylation</keyword>
<keyword id="KW-0636">Prenylation</keyword>
<keyword id="KW-1185">Reference proteome</keyword>
<keyword id="KW-0807">Transducer</keyword>
<name>GBG2_BOVIN</name>